<protein>
    <recommendedName>
        <fullName evidence="8">LIM domain-containing protein PLIM2a</fullName>
    </recommendedName>
    <alternativeName>
        <fullName evidence="6">Pollen-expressed LIM protein 2</fullName>
        <shortName>AtPLIM2</shortName>
    </alternativeName>
</protein>
<reference key="1">
    <citation type="journal article" date="1999" name="Nature">
        <title>Sequence and analysis of chromosome 2 of the plant Arabidopsis thaliana.</title>
        <authorList>
            <person name="Lin X."/>
            <person name="Kaul S."/>
            <person name="Rounsley S.D."/>
            <person name="Shea T.P."/>
            <person name="Benito M.-I."/>
            <person name="Town C.D."/>
            <person name="Fujii C.Y."/>
            <person name="Mason T.M."/>
            <person name="Bowman C.L."/>
            <person name="Barnstead M.E."/>
            <person name="Feldblyum T.V."/>
            <person name="Buell C.R."/>
            <person name="Ketchum K.A."/>
            <person name="Lee J.J."/>
            <person name="Ronning C.M."/>
            <person name="Koo H.L."/>
            <person name="Moffat K.S."/>
            <person name="Cronin L.A."/>
            <person name="Shen M."/>
            <person name="Pai G."/>
            <person name="Van Aken S."/>
            <person name="Umayam L."/>
            <person name="Tallon L.J."/>
            <person name="Gill J.E."/>
            <person name="Adams M.D."/>
            <person name="Carrera A.J."/>
            <person name="Creasy T.H."/>
            <person name="Goodman H.M."/>
            <person name="Somerville C.R."/>
            <person name="Copenhaver G.P."/>
            <person name="Preuss D."/>
            <person name="Nierman W.C."/>
            <person name="White O."/>
            <person name="Eisen J.A."/>
            <person name="Salzberg S.L."/>
            <person name="Fraser C.M."/>
            <person name="Venter J.C."/>
        </authorList>
    </citation>
    <scope>NUCLEOTIDE SEQUENCE [LARGE SCALE GENOMIC DNA]</scope>
    <source>
        <strain>cv. Columbia</strain>
    </source>
</reference>
<reference key="2">
    <citation type="journal article" date="2017" name="Plant J.">
        <title>Araport11: a complete reannotation of the Arabidopsis thaliana reference genome.</title>
        <authorList>
            <person name="Cheng C.Y."/>
            <person name="Krishnakumar V."/>
            <person name="Chan A.P."/>
            <person name="Thibaud-Nissen F."/>
            <person name="Schobel S."/>
            <person name="Town C.D."/>
        </authorList>
    </citation>
    <scope>GENOME REANNOTATION</scope>
    <source>
        <strain>cv. Columbia</strain>
    </source>
</reference>
<reference key="3">
    <citation type="journal article" date="2002" name="Science">
        <title>Functional annotation of a full-length Arabidopsis cDNA collection.</title>
        <authorList>
            <person name="Seki M."/>
            <person name="Narusaka M."/>
            <person name="Kamiya A."/>
            <person name="Ishida J."/>
            <person name="Satou M."/>
            <person name="Sakurai T."/>
            <person name="Nakajima M."/>
            <person name="Enju A."/>
            <person name="Akiyama K."/>
            <person name="Oono Y."/>
            <person name="Muramatsu M."/>
            <person name="Hayashizaki Y."/>
            <person name="Kawai J."/>
            <person name="Carninci P."/>
            <person name="Itoh M."/>
            <person name="Ishii Y."/>
            <person name="Arakawa T."/>
            <person name="Shibata K."/>
            <person name="Shinagawa A."/>
            <person name="Shinozaki K."/>
        </authorList>
    </citation>
    <scope>NUCLEOTIDE SEQUENCE [LARGE SCALE MRNA] (ISOFORM 1)</scope>
    <source>
        <strain>cv. Columbia</strain>
    </source>
</reference>
<reference key="4">
    <citation type="journal article" date="2003" name="Science">
        <title>Empirical analysis of transcriptional activity in the Arabidopsis genome.</title>
        <authorList>
            <person name="Yamada K."/>
            <person name="Lim J."/>
            <person name="Dale J.M."/>
            <person name="Chen H."/>
            <person name="Shinn P."/>
            <person name="Palm C.J."/>
            <person name="Southwick A.M."/>
            <person name="Wu H.C."/>
            <person name="Kim C.J."/>
            <person name="Nguyen M."/>
            <person name="Pham P.K."/>
            <person name="Cheuk R.F."/>
            <person name="Karlin-Newmann G."/>
            <person name="Liu S.X."/>
            <person name="Lam B."/>
            <person name="Sakano H."/>
            <person name="Wu T."/>
            <person name="Yu G."/>
            <person name="Miranda M."/>
            <person name="Quach H.L."/>
            <person name="Tripp M."/>
            <person name="Chang C.H."/>
            <person name="Lee J.M."/>
            <person name="Toriumi M.J."/>
            <person name="Chan M.M."/>
            <person name="Tang C.C."/>
            <person name="Onodera C.S."/>
            <person name="Deng J.M."/>
            <person name="Akiyama K."/>
            <person name="Ansari Y."/>
            <person name="Arakawa T."/>
            <person name="Banh J."/>
            <person name="Banno F."/>
            <person name="Bowser L."/>
            <person name="Brooks S.Y."/>
            <person name="Carninci P."/>
            <person name="Chao Q."/>
            <person name="Choy N."/>
            <person name="Enju A."/>
            <person name="Goldsmith A.D."/>
            <person name="Gurjal M."/>
            <person name="Hansen N.F."/>
            <person name="Hayashizaki Y."/>
            <person name="Johnson-Hopson C."/>
            <person name="Hsuan V.W."/>
            <person name="Iida K."/>
            <person name="Karnes M."/>
            <person name="Khan S."/>
            <person name="Koesema E."/>
            <person name="Ishida J."/>
            <person name="Jiang P.X."/>
            <person name="Jones T."/>
            <person name="Kawai J."/>
            <person name="Kamiya A."/>
            <person name="Meyers C."/>
            <person name="Nakajima M."/>
            <person name="Narusaka M."/>
            <person name="Seki M."/>
            <person name="Sakurai T."/>
            <person name="Satou M."/>
            <person name="Tamse R."/>
            <person name="Vaysberg M."/>
            <person name="Wallender E.K."/>
            <person name="Wong C."/>
            <person name="Yamamura Y."/>
            <person name="Yuan S."/>
            <person name="Shinozaki K."/>
            <person name="Davis R.W."/>
            <person name="Theologis A."/>
            <person name="Ecker J.R."/>
        </authorList>
    </citation>
    <scope>NUCLEOTIDE SEQUENCE [LARGE SCALE MRNA] (ISOFORM 1)</scope>
    <source>
        <strain>cv. Columbia</strain>
    </source>
</reference>
<reference key="5">
    <citation type="journal article" date="2000" name="Mol. Gen. Genet.">
        <title>Molecular and expression analysis of a LIM protein gene family from flowering plants.</title>
        <authorList>
            <person name="Eliasson A."/>
            <person name="Gass N."/>
            <person name="Mundel C."/>
            <person name="Baltz R."/>
            <person name="Kraeuter R."/>
            <person name="Evrard J.L."/>
            <person name="Steinmetz A."/>
        </authorList>
    </citation>
    <scope>TISSUE SPECIFICITY</scope>
</reference>
<reference key="6">
    <citation type="journal article" date="2007" name="DNA Res.">
        <title>Genome-wide analysis of LIM gene family in Populus trichocarpa, Arabidopsis thaliana, and Oryza sativa.</title>
        <authorList>
            <person name="Arnaud D."/>
            <person name="Dejardin A."/>
            <person name="Leple J.C."/>
            <person name="Lesage-Descauses M.C."/>
            <person name="Pilate G."/>
        </authorList>
    </citation>
    <scope>GENE FAMILY</scope>
    <scope>NOMENCLATURE</scope>
</reference>
<reference key="7">
    <citation type="journal article" date="2007" name="Plant Physiol.">
        <title>Global expression profiling applied to the analysis of Arabidopsis stamen development.</title>
        <authorList>
            <person name="Alves-Ferreira M."/>
            <person name="Wellmer F."/>
            <person name="Banhara A."/>
            <person name="Kumar V."/>
            <person name="Riechmann J.L."/>
            <person name="Meyerowitz E.M."/>
        </authorList>
    </citation>
    <scope>TISSUE SPECIFICITY</scope>
</reference>
<reference key="8">
    <citation type="journal article" date="2010" name="Plant Cell">
        <title>Arabidopsis LIM proteins: a family of actin bundlers with distinct expression patterns and modes of regulation.</title>
        <authorList>
            <person name="Papuga J."/>
            <person name="Hoffmann C."/>
            <person name="Dieterle M."/>
            <person name="Moes D."/>
            <person name="Moreau F."/>
            <person name="Tholl S."/>
            <person name="Steinmetz A."/>
            <person name="Thomas C."/>
        </authorList>
    </citation>
    <scope>FUNCTION</scope>
    <scope>TISSUE SPECIFICITY</scope>
    <scope>SUBCELLULAR LOCATION</scope>
    <scope>INTERACTION WITH F-ACTIN</scope>
</reference>
<evidence type="ECO:0000255" key="1">
    <source>
        <dbReference type="PROSITE-ProRule" id="PRU00125"/>
    </source>
</evidence>
<evidence type="ECO:0000256" key="2">
    <source>
        <dbReference type="SAM" id="MobiDB-lite"/>
    </source>
</evidence>
<evidence type="ECO:0000269" key="3">
    <source>
    </source>
</evidence>
<evidence type="ECO:0000269" key="4">
    <source>
    </source>
</evidence>
<evidence type="ECO:0000269" key="5">
    <source>
    </source>
</evidence>
<evidence type="ECO:0000303" key="6">
    <source>
    </source>
</evidence>
<evidence type="ECO:0000303" key="7">
    <source>
    </source>
</evidence>
<evidence type="ECO:0000305" key="8"/>
<evidence type="ECO:0000312" key="9">
    <source>
        <dbReference type="Araport" id="AT2G45800"/>
    </source>
</evidence>
<evidence type="ECO:0000312" key="10">
    <source>
        <dbReference type="EMBL" id="AAC28544.1"/>
    </source>
</evidence>
<sequence length="226" mass="24943">MSFTGTLDKCKACDKTVYVMDLLTLEGNTYHKSCFRCTHCKGTLVISNYSSMDGVLYCKPHFEQLFKESGNYSKNFQAGKTEKPNDHLTRTPSKLSSFFSGTQDKCATCKKTVYPLEKVTMEGESYHKTCFRCTHSGCPLTHSSYASLNGVLYCKVHFNQLFLEKGSYNHVHQAAANHRRSASSGGASPPSDDHKPDDTASIPEAKEDDAAPEAAGEEEPEPVVES</sequence>
<proteinExistence type="evidence at protein level"/>
<accession>O80839</accession>
<accession>F4IH47</accession>
<organism>
    <name type="scientific">Arabidopsis thaliana</name>
    <name type="common">Mouse-ear cress</name>
    <dbReference type="NCBI Taxonomy" id="3702"/>
    <lineage>
        <taxon>Eukaryota</taxon>
        <taxon>Viridiplantae</taxon>
        <taxon>Streptophyta</taxon>
        <taxon>Embryophyta</taxon>
        <taxon>Tracheophyta</taxon>
        <taxon>Spermatophyta</taxon>
        <taxon>Magnoliopsida</taxon>
        <taxon>eudicotyledons</taxon>
        <taxon>Gunneridae</taxon>
        <taxon>Pentapetalae</taxon>
        <taxon>rosids</taxon>
        <taxon>malvids</taxon>
        <taxon>Brassicales</taxon>
        <taxon>Brassicaceae</taxon>
        <taxon>Camelineae</taxon>
        <taxon>Arabidopsis</taxon>
    </lineage>
</organism>
<keyword id="KW-0009">Actin-binding</keyword>
<keyword id="KW-0025">Alternative splicing</keyword>
<keyword id="KW-0963">Cytoplasm</keyword>
<keyword id="KW-0206">Cytoskeleton</keyword>
<keyword id="KW-0440">LIM domain</keyword>
<keyword id="KW-0479">Metal-binding</keyword>
<keyword id="KW-1185">Reference proteome</keyword>
<keyword id="KW-0677">Repeat</keyword>
<keyword id="KW-0862">Zinc</keyword>
<feature type="chain" id="PRO_0000430595" description="LIM domain-containing protein PLIM2a">
    <location>
        <begin position="1"/>
        <end position="226"/>
    </location>
</feature>
<feature type="domain" description="LIM zinc-binding 1" evidence="1">
    <location>
        <begin position="8"/>
        <end position="68"/>
    </location>
</feature>
<feature type="domain" description="LIM zinc-binding 2" evidence="1">
    <location>
        <begin position="104"/>
        <end position="164"/>
    </location>
</feature>
<feature type="region of interest" description="Disordered" evidence="2">
    <location>
        <begin position="173"/>
        <end position="226"/>
    </location>
</feature>
<feature type="compositionally biased region" description="Basic and acidic residues" evidence="2">
    <location>
        <begin position="191"/>
        <end position="209"/>
    </location>
</feature>
<feature type="compositionally biased region" description="Acidic residues" evidence="2">
    <location>
        <begin position="210"/>
        <end position="226"/>
    </location>
</feature>
<feature type="splice variant" id="VSP_056811" description="In isoform 2." evidence="8">
    <original>MSFTGTLDKCKACDKTVYVMDLLTLEGNTYHKSCFRCTHCKGTLV</original>
    <variation>MLHCFKRPHLFLTQ</variation>
    <location>
        <begin position="1"/>
        <end position="45"/>
    </location>
</feature>
<dbReference type="EMBL" id="AC004665">
    <property type="protein sequence ID" value="AAC28544.1"/>
    <property type="molecule type" value="Genomic_DNA"/>
</dbReference>
<dbReference type="EMBL" id="CP002685">
    <property type="protein sequence ID" value="AEC10602.1"/>
    <property type="molecule type" value="Genomic_DNA"/>
</dbReference>
<dbReference type="EMBL" id="CP002685">
    <property type="protein sequence ID" value="AEC10603.1"/>
    <property type="molecule type" value="Genomic_DNA"/>
</dbReference>
<dbReference type="EMBL" id="AK118044">
    <property type="protein sequence ID" value="BAC42675.1"/>
    <property type="molecule type" value="mRNA"/>
</dbReference>
<dbReference type="EMBL" id="BT005586">
    <property type="protein sequence ID" value="AAO64006.1"/>
    <property type="molecule type" value="mRNA"/>
</dbReference>
<dbReference type="PIR" id="T02467">
    <property type="entry name" value="T02467"/>
</dbReference>
<dbReference type="RefSeq" id="NP_001031545.1">
    <molecule id="O80839-2"/>
    <property type="nucleotide sequence ID" value="NM_001036468.2"/>
</dbReference>
<dbReference type="RefSeq" id="NP_182104.1">
    <molecule id="O80839-1"/>
    <property type="nucleotide sequence ID" value="NM_130143.4"/>
</dbReference>
<dbReference type="BioGRID" id="4524">
    <property type="interactions" value="6"/>
</dbReference>
<dbReference type="FunCoup" id="O80839">
    <property type="interactions" value="320"/>
</dbReference>
<dbReference type="IntAct" id="O80839">
    <property type="interactions" value="6"/>
</dbReference>
<dbReference type="STRING" id="3702.O80839"/>
<dbReference type="PaxDb" id="3702-AT2G45800.1"/>
<dbReference type="ProteomicsDB" id="236166">
    <molecule id="O80839-1"/>
</dbReference>
<dbReference type="EnsemblPlants" id="AT2G45800.1">
    <molecule id="O80839-1"/>
    <property type="protein sequence ID" value="AT2G45800.1"/>
    <property type="gene ID" value="AT2G45800"/>
</dbReference>
<dbReference type="EnsemblPlants" id="AT2G45800.2">
    <molecule id="O80839-2"/>
    <property type="protein sequence ID" value="AT2G45800.2"/>
    <property type="gene ID" value="AT2G45800"/>
</dbReference>
<dbReference type="GeneID" id="819188"/>
<dbReference type="Gramene" id="AT2G45800.1">
    <molecule id="O80839-1"/>
    <property type="protein sequence ID" value="AT2G45800.1"/>
    <property type="gene ID" value="AT2G45800"/>
</dbReference>
<dbReference type="Gramene" id="AT2G45800.2">
    <molecule id="O80839-2"/>
    <property type="protein sequence ID" value="AT2G45800.2"/>
    <property type="gene ID" value="AT2G45800"/>
</dbReference>
<dbReference type="KEGG" id="ath:AT2G45800"/>
<dbReference type="Araport" id="AT2G45800"/>
<dbReference type="TAIR" id="AT2G45800">
    <property type="gene designation" value="PLIM2A"/>
</dbReference>
<dbReference type="eggNOG" id="KOG1700">
    <property type="taxonomic scope" value="Eukaryota"/>
</dbReference>
<dbReference type="HOGENOM" id="CLU_026811_1_0_1"/>
<dbReference type="InParanoid" id="O80839"/>
<dbReference type="OMA" id="CEAQSHH"/>
<dbReference type="OrthoDB" id="6129702at2759"/>
<dbReference type="PhylomeDB" id="O80839"/>
<dbReference type="PRO" id="PR:O80839"/>
<dbReference type="Proteomes" id="UP000006548">
    <property type="component" value="Chromosome 2"/>
</dbReference>
<dbReference type="ExpressionAtlas" id="O80839">
    <property type="expression patterns" value="baseline and differential"/>
</dbReference>
<dbReference type="GO" id="GO:0005737">
    <property type="term" value="C:cytoplasm"/>
    <property type="evidence" value="ECO:0007669"/>
    <property type="project" value="UniProtKB-KW"/>
</dbReference>
<dbReference type="GO" id="GO:0005856">
    <property type="term" value="C:cytoskeleton"/>
    <property type="evidence" value="ECO:0007669"/>
    <property type="project" value="UniProtKB-SubCell"/>
</dbReference>
<dbReference type="GO" id="GO:0051015">
    <property type="term" value="F:actin filament binding"/>
    <property type="evidence" value="ECO:0000314"/>
    <property type="project" value="TAIR"/>
</dbReference>
<dbReference type="GO" id="GO:0046872">
    <property type="term" value="F:metal ion binding"/>
    <property type="evidence" value="ECO:0007669"/>
    <property type="project" value="UniProtKB-KW"/>
</dbReference>
<dbReference type="GO" id="GO:0051017">
    <property type="term" value="P:actin filament bundle assembly"/>
    <property type="evidence" value="ECO:0000314"/>
    <property type="project" value="TAIR"/>
</dbReference>
<dbReference type="CDD" id="cd09440">
    <property type="entry name" value="LIM1_SF3"/>
    <property type="match status" value="1"/>
</dbReference>
<dbReference type="FunFam" id="2.10.110.10:FF:000002">
    <property type="entry name" value="LIM domain and actin-binding 1"/>
    <property type="match status" value="2"/>
</dbReference>
<dbReference type="Gene3D" id="2.10.110.10">
    <property type="entry name" value="Cysteine Rich Protein"/>
    <property type="match status" value="2"/>
</dbReference>
<dbReference type="InterPro" id="IPR001781">
    <property type="entry name" value="Znf_LIM"/>
</dbReference>
<dbReference type="PANTHER" id="PTHR24206">
    <property type="entry name" value="OS06G0237300 PROTEIN"/>
    <property type="match status" value="1"/>
</dbReference>
<dbReference type="Pfam" id="PF00412">
    <property type="entry name" value="LIM"/>
    <property type="match status" value="2"/>
</dbReference>
<dbReference type="SMART" id="SM00132">
    <property type="entry name" value="LIM"/>
    <property type="match status" value="2"/>
</dbReference>
<dbReference type="SUPFAM" id="SSF57716">
    <property type="entry name" value="Glucocorticoid receptor-like (DNA-binding domain)"/>
    <property type="match status" value="4"/>
</dbReference>
<dbReference type="PROSITE" id="PS00478">
    <property type="entry name" value="LIM_DOMAIN_1"/>
    <property type="match status" value="1"/>
</dbReference>
<dbReference type="PROSITE" id="PS50023">
    <property type="entry name" value="LIM_DOMAIN_2"/>
    <property type="match status" value="2"/>
</dbReference>
<gene>
    <name evidence="7" type="primary">PLIM2A</name>
    <name evidence="6" type="synonym">PLIM2</name>
    <name evidence="9" type="ordered locus">At2g45800</name>
    <name evidence="10" type="ORF">F4I18.22</name>
</gene>
<name>PLI2A_ARATH</name>
<comment type="function">
    <text evidence="5">Binds to actin filaments and promotes cross-linking into thick bundles. Has an actin-stabilizing activity. The actin regulatory activities are inhibited by pH &gt; 6.8 but are [Ca(2+)] independent.</text>
</comment>
<comment type="subunit">
    <text evidence="5">Interacts with F-actin.</text>
</comment>
<comment type="subcellular location">
    <subcellularLocation>
        <location evidence="5">Cytoplasm</location>
        <location evidence="5">Cytoskeleton</location>
    </subcellularLocation>
</comment>
<comment type="alternative products">
    <event type="alternative splicing"/>
    <isoform>
        <id>O80839-1</id>
        <name>1</name>
        <sequence type="displayed"/>
    </isoform>
    <isoform>
        <id>O80839-2</id>
        <name>2</name>
        <sequence type="described" ref="VSP_056811"/>
    </isoform>
</comment>
<comment type="tissue specificity">
    <text evidence="3 4 5">Predominantly expressed in flowers, in the tapetum and in pollen grains. Detected in leaves and stems.</text>
</comment>
<comment type="miscellaneous">
    <text evidence="5">Cross-links actin with a constant of dissociation of 1.3 uM.</text>
</comment>